<comment type="function">
    <text>Binds phosphatidylcholine, phosphatidylinositol, polychlorinated biphenyls (PCB) and weakly progesterone, potent inhibitor of phospholipase A2.</text>
</comment>
<comment type="subunit">
    <text evidence="4 5 6">Antiparallel homodimer; disulfide-linked (PubMed:7664082). Interaction with LMBR1L has been observed in PubMed:16423471, but not in PubMed:23964685 (PubMed:16423471, PubMed:23964685).</text>
</comment>
<comment type="interaction">
    <interactant intactId="EBI-7797649">
        <id>P11684</id>
    </interactant>
    <interactant intactId="EBI-698810">
        <id>P62736</id>
        <label>ACTA2</label>
    </interactant>
    <organismsDiffer>false</organismsDiffer>
    <experiments>2</experiments>
</comment>
<comment type="interaction">
    <interactant intactId="EBI-7797649">
        <id>P11684</id>
    </interactant>
    <interactant intactId="EBI-13059134">
        <id>Q13520</id>
        <label>AQP6</label>
    </interactant>
    <organismsDiffer>false</organismsDiffer>
    <experiments>3</experiments>
</comment>
<comment type="interaction">
    <interactant intactId="EBI-7797649">
        <id>P11684</id>
    </interactant>
    <interactant intactId="EBI-1220319">
        <id>P02751</id>
        <label>FN1</label>
    </interactant>
    <organismsDiffer>false</organismsDiffer>
    <experiments>3</experiments>
</comment>
<comment type="interaction">
    <interactant intactId="EBI-7797649">
        <id>P11684</id>
    </interactant>
    <interactant intactId="EBI-852851">
        <id>P01100</id>
        <label>FOS</label>
    </interactant>
    <organismsDiffer>false</organismsDiffer>
    <experiments>3</experiments>
</comment>
<comment type="interaction">
    <interactant intactId="EBI-7797649">
        <id>P11684</id>
    </interactant>
    <interactant intactId="EBI-2552594">
        <id>P50440</id>
        <label>GATM</label>
    </interactant>
    <organismsDiffer>false</organismsDiffer>
    <experiments>3</experiments>
</comment>
<comment type="interaction">
    <interactant intactId="EBI-7797649">
        <id>P11684</id>
    </interactant>
    <interactant intactId="EBI-719620">
        <id>Q00613</id>
        <label>HSF1</label>
    </interactant>
    <organismsDiffer>false</organismsDiffer>
    <experiments>3</experiments>
</comment>
<comment type="interaction">
    <interactant intactId="EBI-7797649">
        <id>P11684</id>
    </interactant>
    <interactant intactId="EBI-721293">
        <id>Q9BTV4</id>
        <label>TMEM43</label>
    </interactant>
    <organismsDiffer>false</organismsDiffer>
    <experiments>3</experiments>
</comment>
<comment type="interaction">
    <interactant intactId="EBI-7797649">
        <id>P11684</id>
    </interactant>
    <interactant intactId="EBI-742790">
        <id>Q13049</id>
        <label>TRIM32</label>
    </interactant>
    <organismsDiffer>false</organismsDiffer>
    <experiments>8</experiments>
</comment>
<comment type="subcellular location">
    <subcellularLocation>
        <location>Secreted</location>
    </subcellularLocation>
</comment>
<comment type="tissue specificity">
    <text>Club cells (nonciliated cells of the surface epithelium of the pulmonary airways).</text>
</comment>
<comment type="similarity">
    <text evidence="7">Belongs to the secretoglobin family.</text>
</comment>
<organism>
    <name type="scientific">Homo sapiens</name>
    <name type="common">Human</name>
    <dbReference type="NCBI Taxonomy" id="9606"/>
    <lineage>
        <taxon>Eukaryota</taxon>
        <taxon>Metazoa</taxon>
        <taxon>Chordata</taxon>
        <taxon>Craniata</taxon>
        <taxon>Vertebrata</taxon>
        <taxon>Euteleostomi</taxon>
        <taxon>Mammalia</taxon>
        <taxon>Eutheria</taxon>
        <taxon>Euarchontoglires</taxon>
        <taxon>Primates</taxon>
        <taxon>Haplorrhini</taxon>
        <taxon>Catarrhini</taxon>
        <taxon>Hominidae</taxon>
        <taxon>Homo</taxon>
    </lineage>
</organism>
<reference key="1">
    <citation type="journal article" date="1988" name="Biochim. Biophys. Acta">
        <title>Amino-acid and cDNA nucleotide sequences of human Clara cell 10 kDa protein.</title>
        <authorList>
            <person name="Singh G."/>
            <person name="Katyal S.L."/>
            <person name="Brown W.E."/>
            <person name="Phillips S."/>
            <person name="Kennedy A.L."/>
            <person name="Anthony J."/>
            <person name="Squeglia N."/>
        </authorList>
    </citation>
    <scope>NUCLEOTIDE SEQUENCE [MRNA]</scope>
    <source>
        <tissue>Lung</tissue>
    </source>
</reference>
<reference key="2">
    <citation type="journal article" date="1995" name="Am. J. Physiol.">
        <title>Human CC10 gene expression in airway epithelium and subchromosomal locus suggest linkage to airway disease.</title>
        <authorList>
            <person name="Hay J.G."/>
            <person name="Danel C."/>
            <person name="Chu C."/>
            <person name="Crystal R.G."/>
        </authorList>
    </citation>
    <scope>NUCLEOTIDE SEQUENCE [GENOMIC DNA / MRNA]</scope>
    <source>
        <tissue>Lung</tissue>
    </source>
</reference>
<reference key="3">
    <citation type="submission" date="2004-06" db="EMBL/GenBank/DDBJ databases">
        <title>Cloning of human full open reading frames in Gateway(TM) system entry vector (pDONR201).</title>
        <authorList>
            <person name="Ebert L."/>
            <person name="Schick M."/>
            <person name="Neubert P."/>
            <person name="Schatten R."/>
            <person name="Henze S."/>
            <person name="Korn B."/>
        </authorList>
    </citation>
    <scope>NUCLEOTIDE SEQUENCE [LARGE SCALE MRNA]</scope>
</reference>
<reference key="4">
    <citation type="journal article" date="2004" name="Nat. Genet.">
        <title>Complete sequencing and characterization of 21,243 full-length human cDNAs.</title>
        <authorList>
            <person name="Ota T."/>
            <person name="Suzuki Y."/>
            <person name="Nishikawa T."/>
            <person name="Otsuki T."/>
            <person name="Sugiyama T."/>
            <person name="Irie R."/>
            <person name="Wakamatsu A."/>
            <person name="Hayashi K."/>
            <person name="Sato H."/>
            <person name="Nagai K."/>
            <person name="Kimura K."/>
            <person name="Makita H."/>
            <person name="Sekine M."/>
            <person name="Obayashi M."/>
            <person name="Nishi T."/>
            <person name="Shibahara T."/>
            <person name="Tanaka T."/>
            <person name="Ishii S."/>
            <person name="Yamamoto J."/>
            <person name="Saito K."/>
            <person name="Kawai Y."/>
            <person name="Isono Y."/>
            <person name="Nakamura Y."/>
            <person name="Nagahari K."/>
            <person name="Murakami K."/>
            <person name="Yasuda T."/>
            <person name="Iwayanagi T."/>
            <person name="Wagatsuma M."/>
            <person name="Shiratori A."/>
            <person name="Sudo H."/>
            <person name="Hosoiri T."/>
            <person name="Kaku Y."/>
            <person name="Kodaira H."/>
            <person name="Kondo H."/>
            <person name="Sugawara M."/>
            <person name="Takahashi M."/>
            <person name="Kanda K."/>
            <person name="Yokoi T."/>
            <person name="Furuya T."/>
            <person name="Kikkawa E."/>
            <person name="Omura Y."/>
            <person name="Abe K."/>
            <person name="Kamihara K."/>
            <person name="Katsuta N."/>
            <person name="Sato K."/>
            <person name="Tanikawa M."/>
            <person name="Yamazaki M."/>
            <person name="Ninomiya K."/>
            <person name="Ishibashi T."/>
            <person name="Yamashita H."/>
            <person name="Murakawa K."/>
            <person name="Fujimori K."/>
            <person name="Tanai H."/>
            <person name="Kimata M."/>
            <person name="Watanabe M."/>
            <person name="Hiraoka S."/>
            <person name="Chiba Y."/>
            <person name="Ishida S."/>
            <person name="Ono Y."/>
            <person name="Takiguchi S."/>
            <person name="Watanabe S."/>
            <person name="Yosida M."/>
            <person name="Hotuta T."/>
            <person name="Kusano J."/>
            <person name="Kanehori K."/>
            <person name="Takahashi-Fujii A."/>
            <person name="Hara H."/>
            <person name="Tanase T.-O."/>
            <person name="Nomura Y."/>
            <person name="Togiya S."/>
            <person name="Komai F."/>
            <person name="Hara R."/>
            <person name="Takeuchi K."/>
            <person name="Arita M."/>
            <person name="Imose N."/>
            <person name="Musashino K."/>
            <person name="Yuuki H."/>
            <person name="Oshima A."/>
            <person name="Sasaki N."/>
            <person name="Aotsuka S."/>
            <person name="Yoshikawa Y."/>
            <person name="Matsunawa H."/>
            <person name="Ichihara T."/>
            <person name="Shiohata N."/>
            <person name="Sano S."/>
            <person name="Moriya S."/>
            <person name="Momiyama H."/>
            <person name="Satoh N."/>
            <person name="Takami S."/>
            <person name="Terashima Y."/>
            <person name="Suzuki O."/>
            <person name="Nakagawa S."/>
            <person name="Senoh A."/>
            <person name="Mizoguchi H."/>
            <person name="Goto Y."/>
            <person name="Shimizu F."/>
            <person name="Wakebe H."/>
            <person name="Hishigaki H."/>
            <person name="Watanabe T."/>
            <person name="Sugiyama A."/>
            <person name="Takemoto M."/>
            <person name="Kawakami B."/>
            <person name="Yamazaki M."/>
            <person name="Watanabe K."/>
            <person name="Kumagai A."/>
            <person name="Itakura S."/>
            <person name="Fukuzumi Y."/>
            <person name="Fujimori Y."/>
            <person name="Komiyama M."/>
            <person name="Tashiro H."/>
            <person name="Tanigami A."/>
            <person name="Fujiwara T."/>
            <person name="Ono T."/>
            <person name="Yamada K."/>
            <person name="Fujii Y."/>
            <person name="Ozaki K."/>
            <person name="Hirao M."/>
            <person name="Ohmori Y."/>
            <person name="Kawabata A."/>
            <person name="Hikiji T."/>
            <person name="Kobatake N."/>
            <person name="Inagaki H."/>
            <person name="Ikema Y."/>
            <person name="Okamoto S."/>
            <person name="Okitani R."/>
            <person name="Kawakami T."/>
            <person name="Noguchi S."/>
            <person name="Itoh T."/>
            <person name="Shigeta K."/>
            <person name="Senba T."/>
            <person name="Matsumura K."/>
            <person name="Nakajima Y."/>
            <person name="Mizuno T."/>
            <person name="Morinaga M."/>
            <person name="Sasaki M."/>
            <person name="Togashi T."/>
            <person name="Oyama M."/>
            <person name="Hata H."/>
            <person name="Watanabe M."/>
            <person name="Komatsu T."/>
            <person name="Mizushima-Sugano J."/>
            <person name="Satoh T."/>
            <person name="Shirai Y."/>
            <person name="Takahashi Y."/>
            <person name="Nakagawa K."/>
            <person name="Okumura K."/>
            <person name="Nagase T."/>
            <person name="Nomura N."/>
            <person name="Kikuchi H."/>
            <person name="Masuho Y."/>
            <person name="Yamashita R."/>
            <person name="Nakai K."/>
            <person name="Yada T."/>
            <person name="Nakamura Y."/>
            <person name="Ohara O."/>
            <person name="Isogai T."/>
            <person name="Sugano S."/>
        </authorList>
    </citation>
    <scope>NUCLEOTIDE SEQUENCE [LARGE SCALE MRNA]</scope>
    <source>
        <tissue>Tongue</tissue>
    </source>
</reference>
<reference key="5">
    <citation type="submission" date="2005-07" db="EMBL/GenBank/DDBJ databases">
        <authorList>
            <person name="Mural R.J."/>
            <person name="Istrail S."/>
            <person name="Sutton G.G."/>
            <person name="Florea L."/>
            <person name="Halpern A.L."/>
            <person name="Mobarry C.M."/>
            <person name="Lippert R."/>
            <person name="Walenz B."/>
            <person name="Shatkay H."/>
            <person name="Dew I."/>
            <person name="Miller J.R."/>
            <person name="Flanigan M.J."/>
            <person name="Edwards N.J."/>
            <person name="Bolanos R."/>
            <person name="Fasulo D."/>
            <person name="Halldorsson B.V."/>
            <person name="Hannenhalli S."/>
            <person name="Turner R."/>
            <person name="Yooseph S."/>
            <person name="Lu F."/>
            <person name="Nusskern D.R."/>
            <person name="Shue B.C."/>
            <person name="Zheng X.H."/>
            <person name="Zhong F."/>
            <person name="Delcher A.L."/>
            <person name="Huson D.H."/>
            <person name="Kravitz S.A."/>
            <person name="Mouchard L."/>
            <person name="Reinert K."/>
            <person name="Remington K.A."/>
            <person name="Clark A.G."/>
            <person name="Waterman M.S."/>
            <person name="Eichler E.E."/>
            <person name="Adams M.D."/>
            <person name="Hunkapiller M.W."/>
            <person name="Myers E.W."/>
            <person name="Venter J.C."/>
        </authorList>
    </citation>
    <scope>NUCLEOTIDE SEQUENCE [LARGE SCALE GENOMIC DNA]</scope>
</reference>
<reference key="6">
    <citation type="journal article" date="2004" name="Genome Res.">
        <title>The status, quality, and expansion of the NIH full-length cDNA project: the Mammalian Gene Collection (MGC).</title>
        <authorList>
            <consortium name="The MGC Project Team"/>
        </authorList>
    </citation>
    <scope>NUCLEOTIDE SEQUENCE [LARGE SCALE MRNA]</scope>
    <source>
        <tissue>Pancreas</tissue>
    </source>
</reference>
<reference key="7">
    <citation type="journal article" date="1992" name="Hum. Mol. Genet.">
        <title>Human CC10, the homologue of rabbit uteroglobin: genomic cloning, chromosomal localization and expression in endometrial cell lines.</title>
        <authorList>
            <person name="Wolf M."/>
            <person name="Klug J."/>
            <person name="Hackenberg R."/>
            <person name="Gessler M."/>
            <person name="Grzeschik K.-H."/>
            <person name="Beato M."/>
            <person name="Suske G."/>
        </authorList>
    </citation>
    <scope>NUCLEOTIDE SEQUENCE [GENOMIC DNA] OF 1-18</scope>
</reference>
<reference key="8">
    <citation type="journal article" date="1992" name="J. Chromatogr. A">
        <title>Simple and high-yield purification of urine protein 1 using immunoaffinity chromatography: evidence for the identity of urine protein 1 and human Clara cell 10-kilodalton protein.</title>
        <authorList>
            <person name="Okutani R."/>
            <person name="Itoh Y."/>
            <person name="Hirata H."/>
            <person name="Kasahara T."/>
            <person name="Mukaida N."/>
            <person name="Kawai T."/>
        </authorList>
    </citation>
    <scope>PROTEIN SEQUENCE OF 22-74</scope>
    <source>
        <tissue>Urine</tissue>
    </source>
</reference>
<reference key="9">
    <citation type="journal article" date="1992" name="Clin. Chim. Acta">
        <title>Human urinary protein 1: evidence for identity with the Clara cell protein and occurrence in respiratory tract and urogenital secretions.</title>
        <authorList>
            <person name="Bernard A."/>
            <person name="Roels H."/>
            <person name="Lauwerys R."/>
            <person name="Witters R."/>
            <person name="Gielens C."/>
            <person name="Soumillion A."/>
            <person name="van Damme J."/>
            <person name="de Ley M."/>
        </authorList>
    </citation>
    <scope>PROTEIN SEQUENCE OF 22-45</scope>
    <source>
        <tissue>Urine</tissue>
    </source>
</reference>
<reference key="10">
    <citation type="journal article" date="2002" name="Proteomics">
        <title>Newly identified proteins in human nasal lavage fluid from non-smokers and smokers using two-dimensional gel electrophoresis and peptide mass fingerprinting.</title>
        <authorList>
            <person name="Ghafouri B."/>
            <person name="Stahlbom B."/>
            <person name="Tagesson C."/>
            <person name="Lindahl M."/>
        </authorList>
    </citation>
    <scope>PROTEIN SEQUENCE OF 22-33</scope>
</reference>
<reference key="11">
    <citation type="journal article" date="2006" name="Gene">
        <title>Interaction of uteroglobin with lipocalin-1 receptor suppresses cancer cell motility and invasion.</title>
        <authorList>
            <person name="Zhang Z."/>
            <person name="Kim S.J."/>
            <person name="Chowdhury B."/>
            <person name="Wang J."/>
            <person name="Lee Y.C."/>
            <person name="Tsai P.C."/>
            <person name="Choi M."/>
            <person name="Mukherjee A.B."/>
        </authorList>
    </citation>
    <scope>INTERACTION WITH LMBR1L</scope>
</reference>
<reference key="12">
    <citation type="journal article" date="2013" name="Mol. Membr. Biol.">
        <title>Expression, characterization and ligand specificity of lipocalin-1 interacting membrane receptor (LIMR).</title>
        <authorList>
            <person name="Hesselink R.W."/>
            <person name="Findlay J.B."/>
        </authorList>
    </citation>
    <scope>ABSENCE OF INTERACTION WITH LMBR1L</scope>
</reference>
<reference key="13">
    <citation type="journal article" date="1994" name="Nat. Struct. Biol.">
        <title>Structure of a human Clara cell phospholipid-binding protein-ligand complex at 1.9-A resolution.</title>
        <authorList>
            <person name="Umland T.C."/>
            <person name="Swaminathan S."/>
            <person name="Singh G."/>
            <person name="Warty V."/>
            <person name="Furey W."/>
            <person name="Pletcher J."/>
            <person name="Sax M."/>
        </authorList>
    </citation>
    <scope>X-RAY CRYSTALLOGRAPHY (1.9 ANGSTROMS)</scope>
    <scope>SUBUNIT</scope>
</reference>
<sequence length="91" mass="9994">MKLAVTLTLVTLALCCSSASAEICPSFQRVIETLLMDTPSSYEAAMELFSPDQDMREAGAQLKKLVDTLPQKPRESIIKLMEKIAQSSLCN</sequence>
<protein>
    <recommendedName>
        <fullName>Uteroglobin</fullName>
    </recommendedName>
    <alternativeName>
        <fullName>Club cell phospholipid-binding protein</fullName>
        <shortName>CCPBP</shortName>
    </alternativeName>
    <alternativeName>
        <fullName>Club cells 10 kDa secretory protein</fullName>
        <shortName>CC10</shortName>
    </alternativeName>
    <alternativeName>
        <fullName>Secretoglobin family 1A member 1</fullName>
    </alternativeName>
    <alternativeName>
        <fullName>Urinary protein 1</fullName>
        <shortName>UP-1</shortName>
        <shortName>UP1</shortName>
        <shortName>Urine protein 1</shortName>
    </alternativeName>
</protein>
<evidence type="ECO:0000269" key="1">
    <source>
    </source>
</evidence>
<evidence type="ECO:0000269" key="2">
    <source>
    </source>
</evidence>
<evidence type="ECO:0000269" key="3">
    <source>
    </source>
</evidence>
<evidence type="ECO:0000269" key="4">
    <source>
    </source>
</evidence>
<evidence type="ECO:0000269" key="5">
    <source>
    </source>
</evidence>
<evidence type="ECO:0000269" key="6">
    <source>
    </source>
</evidence>
<evidence type="ECO:0000305" key="7"/>
<evidence type="ECO:0007829" key="8">
    <source>
        <dbReference type="PDB" id="7VF3"/>
    </source>
</evidence>
<evidence type="ECO:0007829" key="9">
    <source>
        <dbReference type="PDB" id="7VG7"/>
    </source>
</evidence>
<name>UTER_HUMAN</name>
<feature type="signal peptide" evidence="1 2 3">
    <location>
        <begin position="1"/>
        <end position="21"/>
    </location>
</feature>
<feature type="chain" id="PRO_0000036365" description="Uteroglobin">
    <location>
        <begin position="22"/>
        <end position="91"/>
    </location>
</feature>
<feature type="disulfide bond" description="Interchain (with C-90)">
    <location>
        <position position="24"/>
    </location>
</feature>
<feature type="disulfide bond" description="Interchain (with C-24)">
    <location>
        <position position="90"/>
    </location>
</feature>
<feature type="sequence variant" id="VAR_012045" description="In dbSNP:rs1802634.">
    <original>R</original>
    <variation>G</variation>
    <location>
        <position position="56"/>
    </location>
</feature>
<feature type="sequence variant" id="VAR_012046" description="In dbSNP:rs1802632.">
    <original>T</original>
    <variation>A</variation>
    <location>
        <position position="68"/>
    </location>
</feature>
<feature type="sequence conflict" description="In Ref. 10; AA sequence." evidence="7" ref="10">
    <original>C</original>
    <variation>E</variation>
    <location>
        <position position="24"/>
    </location>
</feature>
<feature type="helix" evidence="8">
    <location>
        <begin position="20"/>
        <end position="23"/>
    </location>
</feature>
<feature type="helix" evidence="9">
    <location>
        <begin position="25"/>
        <end position="36"/>
    </location>
</feature>
<feature type="helix" evidence="9">
    <location>
        <begin position="39"/>
        <end position="47"/>
    </location>
</feature>
<feature type="helix" evidence="9">
    <location>
        <begin position="54"/>
        <end position="66"/>
    </location>
</feature>
<feature type="helix" evidence="9">
    <location>
        <begin position="71"/>
        <end position="85"/>
    </location>
</feature>
<feature type="strand" evidence="9">
    <location>
        <begin position="87"/>
        <end position="89"/>
    </location>
</feature>
<accession>P11684</accession>
<accession>B2R5F2</accession>
<accession>Q6FHH3</accession>
<accession>Q9UCM2</accession>
<accession>Q9UCM4</accession>
<proteinExistence type="evidence at protein level"/>
<dbReference type="EMBL" id="X13197">
    <property type="protein sequence ID" value="CAA31584.1"/>
    <property type="molecule type" value="mRNA"/>
</dbReference>
<dbReference type="EMBL" id="U01101">
    <property type="protein sequence ID" value="AAA81885.1"/>
    <property type="molecule type" value="mRNA"/>
</dbReference>
<dbReference type="EMBL" id="U01102">
    <property type="protein sequence ID" value="AAA18297.1"/>
    <property type="molecule type" value="Genomic_DNA"/>
</dbReference>
<dbReference type="EMBL" id="CR541780">
    <property type="protein sequence ID" value="CAG46579.1"/>
    <property type="molecule type" value="mRNA"/>
</dbReference>
<dbReference type="EMBL" id="AK312165">
    <property type="protein sequence ID" value="BAG35099.1"/>
    <property type="molecule type" value="mRNA"/>
</dbReference>
<dbReference type="EMBL" id="CH471076">
    <property type="protein sequence ID" value="EAW74018.1"/>
    <property type="molecule type" value="Genomic_DNA"/>
</dbReference>
<dbReference type="EMBL" id="BC004481">
    <property type="protein sequence ID" value="AAH04481.1"/>
    <property type="molecule type" value="mRNA"/>
</dbReference>
<dbReference type="EMBL" id="X59875">
    <property type="protein sequence ID" value="CAA42532.1"/>
    <property type="molecule type" value="Genomic_DNA"/>
</dbReference>
<dbReference type="CCDS" id="CCDS8020.1"/>
<dbReference type="PIR" id="JS0036">
    <property type="entry name" value="JS0036"/>
</dbReference>
<dbReference type="PIR" id="S26651">
    <property type="entry name" value="S26651"/>
</dbReference>
<dbReference type="RefSeq" id="NP_003348.1">
    <property type="nucleotide sequence ID" value="NM_003357.5"/>
</dbReference>
<dbReference type="PDB" id="7VF3">
    <property type="method" value="X-ray"/>
    <property type="resolution" value="2.29 A"/>
    <property type="chains" value="B/D=21-91"/>
</dbReference>
<dbReference type="PDB" id="7VG7">
    <property type="method" value="X-ray"/>
    <property type="resolution" value="2.50 A"/>
    <property type="chains" value="B=21-89"/>
</dbReference>
<dbReference type="PDBsum" id="7VF3"/>
<dbReference type="PDBsum" id="7VG7"/>
<dbReference type="SMR" id="P11684"/>
<dbReference type="BioGRID" id="113203">
    <property type="interactions" value="13"/>
</dbReference>
<dbReference type="FunCoup" id="P11684">
    <property type="interactions" value="11"/>
</dbReference>
<dbReference type="IntAct" id="P11684">
    <property type="interactions" value="11"/>
</dbReference>
<dbReference type="MINT" id="P11684"/>
<dbReference type="STRING" id="9606.ENSP00000278282"/>
<dbReference type="DrugBank" id="DB08373">
    <property type="generic name" value="4,4'-BIS([H]METHYLSULFONYL)-2,2',5,5'-TETRACHLOROBIPHENYL"/>
</dbReference>
<dbReference type="iPTMnet" id="P11684"/>
<dbReference type="PhosphoSitePlus" id="P11684"/>
<dbReference type="BioMuta" id="SCGB1A1"/>
<dbReference type="DMDM" id="112672"/>
<dbReference type="jPOST" id="P11684"/>
<dbReference type="MassIVE" id="P11684"/>
<dbReference type="PaxDb" id="9606-ENSP00000278282"/>
<dbReference type="PeptideAtlas" id="P11684"/>
<dbReference type="ProteomicsDB" id="52798"/>
<dbReference type="Antibodypedia" id="14807">
    <property type="antibodies" value="469 antibodies from 37 providers"/>
</dbReference>
<dbReference type="DNASU" id="7356"/>
<dbReference type="Ensembl" id="ENST00000278282.3">
    <property type="protein sequence ID" value="ENSP00000278282.2"/>
    <property type="gene ID" value="ENSG00000149021.7"/>
</dbReference>
<dbReference type="GeneID" id="7356"/>
<dbReference type="KEGG" id="hsa:7356"/>
<dbReference type="MANE-Select" id="ENST00000278282.3">
    <property type="protein sequence ID" value="ENSP00000278282.2"/>
    <property type="RefSeq nucleotide sequence ID" value="NM_003357.5"/>
    <property type="RefSeq protein sequence ID" value="NP_003348.1"/>
</dbReference>
<dbReference type="UCSC" id="uc001ntj.4">
    <property type="organism name" value="human"/>
</dbReference>
<dbReference type="AGR" id="HGNC:12523"/>
<dbReference type="CTD" id="7356"/>
<dbReference type="DisGeNET" id="7356"/>
<dbReference type="GeneCards" id="SCGB1A1"/>
<dbReference type="HGNC" id="HGNC:12523">
    <property type="gene designation" value="SCGB1A1"/>
</dbReference>
<dbReference type="HPA" id="ENSG00000149021">
    <property type="expression patterns" value="Tissue enriched (lung)"/>
</dbReference>
<dbReference type="MalaCards" id="SCGB1A1"/>
<dbReference type="MIM" id="192020">
    <property type="type" value="gene"/>
</dbReference>
<dbReference type="neXtProt" id="NX_P11684"/>
<dbReference type="OpenTargets" id="ENSG00000149021"/>
<dbReference type="PharmGKB" id="PA34989"/>
<dbReference type="VEuPathDB" id="HostDB:ENSG00000149021"/>
<dbReference type="eggNOG" id="ENOG502SXFT">
    <property type="taxonomic scope" value="Eukaryota"/>
</dbReference>
<dbReference type="GeneTree" id="ENSGT00940000155073"/>
<dbReference type="HOGENOM" id="CLU_166234_1_0_1"/>
<dbReference type="InParanoid" id="P11684"/>
<dbReference type="OMA" id="MKIAITI"/>
<dbReference type="OrthoDB" id="9585556at2759"/>
<dbReference type="PAN-GO" id="P11684">
    <property type="GO annotations" value="2 GO annotations based on evolutionary models"/>
</dbReference>
<dbReference type="PhylomeDB" id="P11684"/>
<dbReference type="TreeFam" id="TF338407"/>
<dbReference type="PathwayCommons" id="P11684"/>
<dbReference type="SignaLink" id="P11684"/>
<dbReference type="BioGRID-ORCS" id="7356">
    <property type="hits" value="13 hits in 1153 CRISPR screens"/>
</dbReference>
<dbReference type="ChiTaRS" id="SCGB1A1">
    <property type="organism name" value="human"/>
</dbReference>
<dbReference type="GeneWiki" id="Uteroglobin"/>
<dbReference type="GenomeRNAi" id="7356"/>
<dbReference type="Pharos" id="P11684">
    <property type="development level" value="Tbio"/>
</dbReference>
<dbReference type="PRO" id="PR:P11684"/>
<dbReference type="Proteomes" id="UP000005640">
    <property type="component" value="Chromosome 11"/>
</dbReference>
<dbReference type="RNAct" id="P11684">
    <property type="molecule type" value="protein"/>
</dbReference>
<dbReference type="Bgee" id="ENSG00000149021">
    <property type="expression patterns" value="Expressed in bronchial epithelial cell and 117 other cell types or tissues"/>
</dbReference>
<dbReference type="ExpressionAtlas" id="P11684">
    <property type="expression patterns" value="baseline and differential"/>
</dbReference>
<dbReference type="GO" id="GO:0005737">
    <property type="term" value="C:cytoplasm"/>
    <property type="evidence" value="ECO:0000318"/>
    <property type="project" value="GO_Central"/>
</dbReference>
<dbReference type="GO" id="GO:0070062">
    <property type="term" value="C:extracellular exosome"/>
    <property type="evidence" value="ECO:0007005"/>
    <property type="project" value="UniProtKB"/>
</dbReference>
<dbReference type="GO" id="GO:0005615">
    <property type="term" value="C:extracellular space"/>
    <property type="evidence" value="ECO:0000314"/>
    <property type="project" value="UniProtKB"/>
</dbReference>
<dbReference type="GO" id="GO:0005635">
    <property type="term" value="C:nuclear envelope"/>
    <property type="evidence" value="ECO:0007669"/>
    <property type="project" value="Ensembl"/>
</dbReference>
<dbReference type="GO" id="GO:0030141">
    <property type="term" value="C:secretory granule"/>
    <property type="evidence" value="ECO:0007669"/>
    <property type="project" value="Ensembl"/>
</dbReference>
<dbReference type="GO" id="GO:0019834">
    <property type="term" value="F:phospholipase A2 inhibitor activity"/>
    <property type="evidence" value="ECO:0007669"/>
    <property type="project" value="UniProtKB-KW"/>
</dbReference>
<dbReference type="GO" id="GO:0097160">
    <property type="term" value="F:polychlorinated biphenyl binding"/>
    <property type="evidence" value="ECO:0007669"/>
    <property type="project" value="Ensembl"/>
</dbReference>
<dbReference type="GO" id="GO:0007566">
    <property type="term" value="P:embryo implantation"/>
    <property type="evidence" value="ECO:0000304"/>
    <property type="project" value="ProtInc"/>
</dbReference>
<dbReference type="GO" id="GO:0007565">
    <property type="term" value="P:female pregnancy"/>
    <property type="evidence" value="ECO:0000303"/>
    <property type="project" value="ProtInc"/>
</dbReference>
<dbReference type="GO" id="GO:0032696">
    <property type="term" value="P:negative regulation of interleukin-13 production"/>
    <property type="evidence" value="ECO:0007669"/>
    <property type="project" value="Ensembl"/>
</dbReference>
<dbReference type="GO" id="GO:0032713">
    <property type="term" value="P:negative regulation of interleukin-4 production"/>
    <property type="evidence" value="ECO:0007669"/>
    <property type="project" value="Ensembl"/>
</dbReference>
<dbReference type="GO" id="GO:0032714">
    <property type="term" value="P:negative regulation of interleukin-5 production"/>
    <property type="evidence" value="ECO:0007669"/>
    <property type="project" value="Ensembl"/>
</dbReference>
<dbReference type="GO" id="GO:0042130">
    <property type="term" value="P:negative regulation of T cell proliferation"/>
    <property type="evidence" value="ECO:0007669"/>
    <property type="project" value="Ensembl"/>
</dbReference>
<dbReference type="GO" id="GO:0000122">
    <property type="term" value="P:negative regulation of transcription by RNA polymerase II"/>
    <property type="evidence" value="ECO:0007669"/>
    <property type="project" value="Ensembl"/>
</dbReference>
<dbReference type="GO" id="GO:0032689">
    <property type="term" value="P:negative regulation of type II interferon production"/>
    <property type="evidence" value="ECO:0007669"/>
    <property type="project" value="Ensembl"/>
</dbReference>
<dbReference type="GO" id="GO:0050727">
    <property type="term" value="P:regulation of inflammatory response"/>
    <property type="evidence" value="ECO:0007669"/>
    <property type="project" value="Ensembl"/>
</dbReference>
<dbReference type="GO" id="GO:0043488">
    <property type="term" value="P:regulation of mRNA stability"/>
    <property type="evidence" value="ECO:0007669"/>
    <property type="project" value="Ensembl"/>
</dbReference>
<dbReference type="GO" id="GO:0034097">
    <property type="term" value="P:response to cytokine"/>
    <property type="evidence" value="ECO:0007669"/>
    <property type="project" value="Ensembl"/>
</dbReference>
<dbReference type="GO" id="GO:0071774">
    <property type="term" value="P:response to fibroblast growth factor"/>
    <property type="evidence" value="ECO:0007669"/>
    <property type="project" value="Ensembl"/>
</dbReference>
<dbReference type="GO" id="GO:0051384">
    <property type="term" value="P:response to glucocorticoid"/>
    <property type="evidence" value="ECO:0007669"/>
    <property type="project" value="Ensembl"/>
</dbReference>
<dbReference type="GO" id="GO:0032496">
    <property type="term" value="P:response to lipopolysaccharide"/>
    <property type="evidence" value="ECO:0007669"/>
    <property type="project" value="Ensembl"/>
</dbReference>
<dbReference type="GO" id="GO:0010193">
    <property type="term" value="P:response to ozone"/>
    <property type="evidence" value="ECO:0007669"/>
    <property type="project" value="Ensembl"/>
</dbReference>
<dbReference type="GO" id="GO:0034021">
    <property type="term" value="P:response to silicon dioxide"/>
    <property type="evidence" value="ECO:0007669"/>
    <property type="project" value="Ensembl"/>
</dbReference>
<dbReference type="GO" id="GO:0009410">
    <property type="term" value="P:response to xenobiotic stimulus"/>
    <property type="evidence" value="ECO:0007669"/>
    <property type="project" value="Ensembl"/>
</dbReference>
<dbReference type="GO" id="GO:0007165">
    <property type="term" value="P:signal transduction"/>
    <property type="evidence" value="ECO:0000303"/>
    <property type="project" value="ProtInc"/>
</dbReference>
<dbReference type="GO" id="GO:0042098">
    <property type="term" value="P:T cell proliferation"/>
    <property type="evidence" value="ECO:0007669"/>
    <property type="project" value="Ensembl"/>
</dbReference>
<dbReference type="CDD" id="cd00633">
    <property type="entry name" value="Secretoglobin"/>
    <property type="match status" value="1"/>
</dbReference>
<dbReference type="FunFam" id="1.10.210.10:FF:000001">
    <property type="entry name" value="Uteroglobin"/>
    <property type="match status" value="1"/>
</dbReference>
<dbReference type="Gene3D" id="1.10.210.10">
    <property type="entry name" value="Secretoglobin"/>
    <property type="match status" value="1"/>
</dbReference>
<dbReference type="InterPro" id="IPR016126">
    <property type="entry name" value="Secretoglobin"/>
</dbReference>
<dbReference type="InterPro" id="IPR043215">
    <property type="entry name" value="Secretoglobin_1C-like"/>
</dbReference>
<dbReference type="InterPro" id="IPR035960">
    <property type="entry name" value="Secretoglobin_sf"/>
</dbReference>
<dbReference type="InterPro" id="IPR000329">
    <property type="entry name" value="Uteroglobin"/>
</dbReference>
<dbReference type="PANTHER" id="PTHR10136">
    <property type="entry name" value="SECRETOGLOBIN FAMILY 1 MEMBER"/>
    <property type="match status" value="1"/>
</dbReference>
<dbReference type="PANTHER" id="PTHR10136:SF6">
    <property type="entry name" value="UTEROGLOBIN"/>
    <property type="match status" value="1"/>
</dbReference>
<dbReference type="Pfam" id="PF01099">
    <property type="entry name" value="Uteroglobin"/>
    <property type="match status" value="1"/>
</dbReference>
<dbReference type="PRINTS" id="PR00486">
    <property type="entry name" value="UTEROGLOBIN"/>
</dbReference>
<dbReference type="SMART" id="SM00096">
    <property type="entry name" value="UTG"/>
    <property type="match status" value="1"/>
</dbReference>
<dbReference type="SUPFAM" id="SSF48201">
    <property type="entry name" value="Uteroglobin-like"/>
    <property type="match status" value="1"/>
</dbReference>
<dbReference type="PROSITE" id="PS51311">
    <property type="entry name" value="SCGB"/>
    <property type="match status" value="1"/>
</dbReference>
<gene>
    <name type="primary">SCGB1A1</name>
    <name type="synonym">CC10</name>
    <name type="synonym">CCSP</name>
    <name type="synonym">UGB</name>
</gene>
<keyword id="KW-0002">3D-structure</keyword>
<keyword id="KW-0903">Direct protein sequencing</keyword>
<keyword id="KW-1015">Disulfide bond</keyword>
<keyword id="KW-0593">Phospholipase A2 inhibitor</keyword>
<keyword id="KW-1267">Proteomics identification</keyword>
<keyword id="KW-1185">Reference proteome</keyword>
<keyword id="KW-0964">Secreted</keyword>
<keyword id="KW-0732">Signal</keyword>